<feature type="chain" id="PRO_1000184821" description="ATP synthase subunit delta">
    <location>
        <begin position="1"/>
        <end position="182"/>
    </location>
</feature>
<name>ATPD_PARMW</name>
<evidence type="ECO:0000255" key="1">
    <source>
        <dbReference type="HAMAP-Rule" id="MF_01416"/>
    </source>
</evidence>
<organism>
    <name type="scientific">Parasynechococcus marenigrum (strain WH8102)</name>
    <dbReference type="NCBI Taxonomy" id="84588"/>
    <lineage>
        <taxon>Bacteria</taxon>
        <taxon>Bacillati</taxon>
        <taxon>Cyanobacteriota</taxon>
        <taxon>Cyanophyceae</taxon>
        <taxon>Synechococcales</taxon>
        <taxon>Prochlorococcaceae</taxon>
        <taxon>Parasynechococcus</taxon>
        <taxon>Parasynechococcus marenigrum</taxon>
    </lineage>
</organism>
<proteinExistence type="inferred from homology"/>
<gene>
    <name evidence="1" type="primary">atpH</name>
    <name evidence="1" type="synonym">atpD</name>
    <name type="ordered locus">SYNW0493</name>
</gene>
<reference key="1">
    <citation type="journal article" date="2003" name="Nature">
        <title>The genome of a motile marine Synechococcus.</title>
        <authorList>
            <person name="Palenik B."/>
            <person name="Brahamsha B."/>
            <person name="Larimer F.W."/>
            <person name="Land M.L."/>
            <person name="Hauser L."/>
            <person name="Chain P."/>
            <person name="Lamerdin J.E."/>
            <person name="Regala W."/>
            <person name="Allen E.E."/>
            <person name="McCarren J."/>
            <person name="Paulsen I.T."/>
            <person name="Dufresne A."/>
            <person name="Partensky F."/>
            <person name="Webb E.A."/>
            <person name="Waterbury J."/>
        </authorList>
    </citation>
    <scope>NUCLEOTIDE SEQUENCE [LARGE SCALE GENOMIC DNA]</scope>
    <source>
        <strain>WH8102</strain>
    </source>
</reference>
<accession>Q7U8W6</accession>
<protein>
    <recommendedName>
        <fullName evidence="1">ATP synthase subunit delta</fullName>
    </recommendedName>
    <alternativeName>
        <fullName evidence="1">ATP synthase F(1) sector subunit delta</fullName>
    </alternativeName>
    <alternativeName>
        <fullName evidence="1">F-type ATPase subunit delta</fullName>
        <shortName evidence="1">F-ATPase subunit delta</shortName>
    </alternativeName>
</protein>
<keyword id="KW-0066">ATP synthesis</keyword>
<keyword id="KW-0139">CF(1)</keyword>
<keyword id="KW-0375">Hydrogen ion transport</keyword>
<keyword id="KW-0406">Ion transport</keyword>
<keyword id="KW-0472">Membrane</keyword>
<keyword id="KW-0793">Thylakoid</keyword>
<keyword id="KW-0813">Transport</keyword>
<comment type="function">
    <text evidence="1">F(1)F(0) ATP synthase produces ATP from ADP in the presence of a proton or sodium gradient. F-type ATPases consist of two structural domains, F(1) containing the extramembraneous catalytic core and F(0) containing the membrane proton channel, linked together by a central stalk and a peripheral stalk. During catalysis, ATP synthesis in the catalytic domain of F(1) is coupled via a rotary mechanism of the central stalk subunits to proton translocation.</text>
</comment>
<comment type="function">
    <text evidence="1">This protein is part of the stalk that links CF(0) to CF(1). It either transmits conformational changes from CF(0) to CF(1) or is implicated in proton conduction.</text>
</comment>
<comment type="subunit">
    <text evidence="1">F-type ATPases have 2 components, F(1) - the catalytic core - and F(0) - the membrane proton channel. F(1) has five subunits: alpha(3), beta(3), gamma(1), delta(1), epsilon(1). CF(0) has four main subunits: a(1), b(1), b'(1) and c(10-14). The alpha and beta chains form an alternating ring which encloses part of the gamma chain. F(1) is attached to F(0) by a central stalk formed by the gamma and epsilon chains, while a peripheral stalk is formed by the delta, b and b' chains.</text>
</comment>
<comment type="subcellular location">
    <subcellularLocation>
        <location evidence="1">Cellular thylakoid membrane</location>
        <topology evidence="1">Peripheral membrane protein</topology>
    </subcellularLocation>
</comment>
<comment type="similarity">
    <text evidence="1">Belongs to the ATPase delta chain family.</text>
</comment>
<sequence>MPLLNSLATPYAEALLQVTEARGESQTVADQCKQLLEIWDSSADFRNAMVSPVLEPDAKKMALQALVGEQVTPSMLNLLKVLADRQRLLAFDAVMLRYLELYREQQGITLAEVRSAQTLTEDQQAALSKKVQAMAGTNMVDIDLSVDPSLIGGFVVSLGSQVIDASLAGQVRRLGLALAKAS</sequence>
<dbReference type="EMBL" id="BX569690">
    <property type="protein sequence ID" value="CAE07008.1"/>
    <property type="molecule type" value="Genomic_DNA"/>
</dbReference>
<dbReference type="RefSeq" id="WP_011127364.1">
    <property type="nucleotide sequence ID" value="NC_005070.1"/>
</dbReference>
<dbReference type="SMR" id="Q7U8W6"/>
<dbReference type="STRING" id="84588.SYNW0493"/>
<dbReference type="KEGG" id="syw:SYNW0493"/>
<dbReference type="eggNOG" id="COG0712">
    <property type="taxonomic scope" value="Bacteria"/>
</dbReference>
<dbReference type="HOGENOM" id="CLU_085114_4_0_3"/>
<dbReference type="Proteomes" id="UP000001422">
    <property type="component" value="Chromosome"/>
</dbReference>
<dbReference type="GO" id="GO:0031676">
    <property type="term" value="C:plasma membrane-derived thylakoid membrane"/>
    <property type="evidence" value="ECO:0007669"/>
    <property type="project" value="UniProtKB-SubCell"/>
</dbReference>
<dbReference type="GO" id="GO:0045259">
    <property type="term" value="C:proton-transporting ATP synthase complex"/>
    <property type="evidence" value="ECO:0007669"/>
    <property type="project" value="UniProtKB-KW"/>
</dbReference>
<dbReference type="GO" id="GO:0046933">
    <property type="term" value="F:proton-transporting ATP synthase activity, rotational mechanism"/>
    <property type="evidence" value="ECO:0007669"/>
    <property type="project" value="UniProtKB-UniRule"/>
</dbReference>
<dbReference type="Gene3D" id="1.10.520.20">
    <property type="entry name" value="N-terminal domain of the delta subunit of the F1F0-ATP synthase"/>
    <property type="match status" value="1"/>
</dbReference>
<dbReference type="HAMAP" id="MF_01416">
    <property type="entry name" value="ATP_synth_delta_bact"/>
    <property type="match status" value="1"/>
</dbReference>
<dbReference type="InterPro" id="IPR026015">
    <property type="entry name" value="ATP_synth_OSCP/delta_N_sf"/>
</dbReference>
<dbReference type="InterPro" id="IPR000711">
    <property type="entry name" value="ATPase_OSCP/dsu"/>
</dbReference>
<dbReference type="NCBIfam" id="TIGR01145">
    <property type="entry name" value="ATP_synt_delta"/>
    <property type="match status" value="1"/>
</dbReference>
<dbReference type="PANTHER" id="PTHR11910">
    <property type="entry name" value="ATP SYNTHASE DELTA CHAIN"/>
    <property type="match status" value="1"/>
</dbReference>
<dbReference type="Pfam" id="PF00213">
    <property type="entry name" value="OSCP"/>
    <property type="match status" value="1"/>
</dbReference>
<dbReference type="PRINTS" id="PR00125">
    <property type="entry name" value="ATPASEDELTA"/>
</dbReference>
<dbReference type="SUPFAM" id="SSF47928">
    <property type="entry name" value="N-terminal domain of the delta subunit of the F1F0-ATP synthase"/>
    <property type="match status" value="1"/>
</dbReference>